<gene>
    <name evidence="33" type="primary">COP1</name>
    <name evidence="35" type="ordered locus">At2g32950</name>
    <name evidence="36" type="ORF">T21L14.11</name>
</gene>
<name>COP1_ARATH</name>
<evidence type="ECO:0000250" key="1">
    <source>
        <dbReference type="UniProtKB" id="P29590"/>
    </source>
</evidence>
<evidence type="ECO:0000255" key="2"/>
<evidence type="ECO:0000255" key="3">
    <source>
        <dbReference type="PROSITE-ProRule" id="PRU00175"/>
    </source>
</evidence>
<evidence type="ECO:0000256" key="4">
    <source>
        <dbReference type="SAM" id="MobiDB-lite"/>
    </source>
</evidence>
<evidence type="ECO:0000269" key="5">
    <source>
    </source>
</evidence>
<evidence type="ECO:0000269" key="6">
    <source>
    </source>
</evidence>
<evidence type="ECO:0000269" key="7">
    <source>
    </source>
</evidence>
<evidence type="ECO:0000269" key="8">
    <source>
    </source>
</evidence>
<evidence type="ECO:0000269" key="9">
    <source>
    </source>
</evidence>
<evidence type="ECO:0000269" key="10">
    <source>
    </source>
</evidence>
<evidence type="ECO:0000269" key="11">
    <source>
    </source>
</evidence>
<evidence type="ECO:0000269" key="12">
    <source>
    </source>
</evidence>
<evidence type="ECO:0000269" key="13">
    <source>
    </source>
</evidence>
<evidence type="ECO:0000269" key="14">
    <source>
    </source>
</evidence>
<evidence type="ECO:0000269" key="15">
    <source>
    </source>
</evidence>
<evidence type="ECO:0000269" key="16">
    <source>
    </source>
</evidence>
<evidence type="ECO:0000269" key="17">
    <source>
    </source>
</evidence>
<evidence type="ECO:0000269" key="18">
    <source>
    </source>
</evidence>
<evidence type="ECO:0000269" key="19">
    <source>
    </source>
</evidence>
<evidence type="ECO:0000269" key="20">
    <source>
    </source>
</evidence>
<evidence type="ECO:0000269" key="21">
    <source>
    </source>
</evidence>
<evidence type="ECO:0000269" key="22">
    <source>
    </source>
</evidence>
<evidence type="ECO:0000269" key="23">
    <source>
    </source>
</evidence>
<evidence type="ECO:0000269" key="24">
    <source>
    </source>
</evidence>
<evidence type="ECO:0000269" key="25">
    <source>
    </source>
</evidence>
<evidence type="ECO:0000269" key="26">
    <source>
    </source>
</evidence>
<evidence type="ECO:0000269" key="27">
    <source>
    </source>
</evidence>
<evidence type="ECO:0000269" key="28">
    <source>
    </source>
</evidence>
<evidence type="ECO:0000269" key="29">
    <source>
    </source>
</evidence>
<evidence type="ECO:0000269" key="30">
    <source>
    </source>
</evidence>
<evidence type="ECO:0000303" key="31">
    <source>
    </source>
</evidence>
<evidence type="ECO:0000303" key="32">
    <source>
    </source>
</evidence>
<evidence type="ECO:0000303" key="33">
    <source>
    </source>
</evidence>
<evidence type="ECO:0000305" key="34"/>
<evidence type="ECO:0000312" key="35">
    <source>
        <dbReference type="Araport" id="AT2G32950"/>
    </source>
</evidence>
<evidence type="ECO:0000312" key="36">
    <source>
        <dbReference type="EMBL" id="AAB91983.1"/>
    </source>
</evidence>
<evidence type="ECO:0007829" key="37">
    <source>
        <dbReference type="PDB" id="5IGO"/>
    </source>
</evidence>
<evidence type="ECO:0007829" key="38">
    <source>
        <dbReference type="PDB" id="5KWN"/>
    </source>
</evidence>
<evidence type="ECO:0007829" key="39">
    <source>
        <dbReference type="PDB" id="6QTO"/>
    </source>
</evidence>
<evidence type="ECO:0007829" key="40">
    <source>
        <dbReference type="PDB" id="6QTS"/>
    </source>
</evidence>
<feature type="chain" id="PRO_0000055881" description="E3 ubiquitin-protein ligase COP1">
    <location>
        <begin position="1"/>
        <end position="675"/>
    </location>
</feature>
<feature type="repeat" description="WD 1" evidence="2">
    <location>
        <begin position="369"/>
        <end position="408"/>
    </location>
</feature>
<feature type="repeat" description="WD 2" evidence="2">
    <location>
        <begin position="418"/>
        <end position="458"/>
    </location>
</feature>
<feature type="repeat" description="WD 3" evidence="2">
    <location>
        <begin position="461"/>
        <end position="501"/>
    </location>
</feature>
<feature type="repeat" description="WD 4" evidence="2">
    <location>
        <begin position="503"/>
        <end position="543"/>
    </location>
</feature>
<feature type="repeat" description="WD 5" evidence="2">
    <location>
        <begin position="547"/>
        <end position="585"/>
    </location>
</feature>
<feature type="repeat" description="WD 6" evidence="2">
    <location>
        <begin position="588"/>
        <end position="627"/>
    </location>
</feature>
<feature type="repeat" description="WD 7" evidence="2">
    <location>
        <begin position="642"/>
        <end position="675"/>
    </location>
</feature>
<feature type="zinc finger region" description="RING-type" evidence="3">
    <location>
        <begin position="52"/>
        <end position="90"/>
    </location>
</feature>
<feature type="region of interest" description="Disordered" evidence="4">
    <location>
        <begin position="1"/>
        <end position="40"/>
    </location>
</feature>
<feature type="region of interest" description="CLS (cytoplasmic localization signal)" evidence="31 32">
    <location>
        <begin position="67"/>
        <end position="177"/>
    </location>
</feature>
<feature type="region of interest" description="SNLS (subnuclear localization signal)" evidence="32">
    <location>
        <begin position="120"/>
        <end position="177"/>
    </location>
</feature>
<feature type="region of interest" description="Disordered" evidence="4">
    <location>
        <begin position="261"/>
        <end position="290"/>
    </location>
</feature>
<feature type="region of interest" description="Binding of human TRIB1 COP1-binding-motif" evidence="24">
    <location>
        <begin position="593"/>
        <end position="595"/>
    </location>
</feature>
<feature type="coiled-coil region" evidence="2">
    <location>
        <begin position="134"/>
        <end position="201"/>
    </location>
</feature>
<feature type="short sequence motif" description="Bipartite nuclear localization signal" evidence="2">
    <location>
        <begin position="294"/>
        <end position="317"/>
    </location>
</feature>
<feature type="compositionally biased region" description="Polar residues" evidence="4">
    <location>
        <begin position="279"/>
        <end position="290"/>
    </location>
</feature>
<feature type="binding site" evidence="1">
    <location>
        <position position="52"/>
    </location>
    <ligand>
        <name>Zn(2+)</name>
        <dbReference type="ChEBI" id="CHEBI:29105"/>
        <label>1</label>
    </ligand>
</feature>
<feature type="binding site" evidence="1">
    <location>
        <position position="55"/>
    </location>
    <ligand>
        <name>Zn(2+)</name>
        <dbReference type="ChEBI" id="CHEBI:29105"/>
        <label>1</label>
    </ligand>
</feature>
<feature type="binding site" evidence="1">
    <location>
        <position position="67"/>
    </location>
    <ligand>
        <name>Zn(2+)</name>
        <dbReference type="ChEBI" id="CHEBI:29105"/>
        <label>2</label>
    </ligand>
</feature>
<feature type="binding site" evidence="1">
    <location>
        <position position="69"/>
    </location>
    <ligand>
        <name>Zn(2+)</name>
        <dbReference type="ChEBI" id="CHEBI:29105"/>
        <label>2</label>
    </ligand>
</feature>
<feature type="binding site" evidence="1">
    <location>
        <position position="72"/>
    </location>
    <ligand>
        <name>Zn(2+)</name>
        <dbReference type="ChEBI" id="CHEBI:29105"/>
        <label>1</label>
    </ligand>
</feature>
<feature type="binding site" evidence="1">
    <location>
        <position position="75"/>
    </location>
    <ligand>
        <name>Zn(2+)</name>
        <dbReference type="ChEBI" id="CHEBI:29105"/>
        <label>1</label>
    </ligand>
</feature>
<feature type="binding site" evidence="1">
    <location>
        <position position="86"/>
    </location>
    <ligand>
        <name>Zn(2+)</name>
        <dbReference type="ChEBI" id="CHEBI:29105"/>
        <label>2</label>
    </ligand>
</feature>
<feature type="binding site" evidence="1">
    <location>
        <position position="89"/>
    </location>
    <ligand>
        <name>Zn(2+)</name>
        <dbReference type="ChEBI" id="CHEBI:29105"/>
        <label>2</label>
    </ligand>
</feature>
<feature type="site" description="Human TRIB1 COP1-binding motif" evidence="24">
    <location>
        <position position="422"/>
    </location>
</feature>
<feature type="site" description="Human TRIB1 COP1-binding motif" evidence="24">
    <location>
        <position position="441"/>
    </location>
</feature>
<feature type="mutagenesis site" description="Abolishes LAF1 ubiquitination and degradation; when associated with S-55." evidence="13">
    <original>C</original>
    <variation>S</variation>
    <location>
        <position position="52"/>
    </location>
</feature>
<feature type="mutagenesis site" description="Abolishes LAF1 ubiquitination and degradation; when associated with S-52." evidence="13">
    <original>C</original>
    <variation>S</variation>
    <location>
        <position position="55"/>
    </location>
</feature>
<feature type="mutagenesis site" description="Abolishes localization to the nucleus." evidence="5">
    <original>RKK</original>
    <variation>SKT</variation>
    <location>
        <begin position="294"/>
        <end position="296"/>
    </location>
</feature>
<feature type="mutagenesis site" description="Abolishes localization to the nucleus." evidence="5">
    <original>KRR</original>
    <variation>TRS</variation>
    <location>
        <begin position="312"/>
        <end position="314"/>
    </location>
</feature>
<feature type="mutagenesis site" description="5-fold increase in interaction with HY5, weak interaction with BBX24/STO and BBX25/STH, and at low light intensity shorter hypocotyl." evidence="9">
    <original>K</original>
    <variation>E</variation>
    <location>
        <position position="422"/>
    </location>
</feature>
<feature type="mutagenesis site" description="No interaction with BBX24/STO and BBX25/STH, and at low light intensity shorter hypocotyl." evidence="9">
    <original>R</original>
    <variation>E</variation>
    <location>
        <position position="465"/>
    </location>
</feature>
<feature type="mutagenesis site" description="No interaction with HY5, BBX24/STO and BBX25/STH and at low light intensity shorter hypocotyl." evidence="9">
    <original>W</original>
    <variation>A</variation>
    <location>
        <position position="467"/>
    </location>
</feature>
<feature type="mutagenesis site" description="In COP1-8; no interaction with SPA1 and lethal.">
    <location>
        <begin position="523"/>
        <end position="584"/>
    </location>
</feature>
<feature type="mutagenesis site" description="In COP1-9; no interaction with HY5, SPA1, BBX25/STH or BBX24/STO and lethal.">
    <original>G</original>
    <variation>E</variation>
    <location>
        <position position="524"/>
    </location>
</feature>
<feature type="mutagenesis site" description="No interaction with HY5, BBX24/STO and BBX25/STH and at low light intensity shorter hypocotyl." evidence="9">
    <original>K</original>
    <variation>E</variation>
    <location>
        <position position="550"/>
    </location>
</feature>
<feature type="mutagenesis site" description="Better interaction with HY5, BBX24/STO and BBX25/STH and slightly longer hypocotyls." evidence="9">
    <original>E</original>
    <variation>R</variation>
    <location>
        <position position="592"/>
    </location>
</feature>
<feature type="sequence conflict" description="In Ref. 1; AAA32772." evidence="34" ref="1">
    <original>M</original>
    <variation>I</variation>
    <location>
        <position position="292"/>
    </location>
</feature>
<feature type="sequence conflict" description="In Ref. 5; CAA04168." evidence="34" ref="5">
    <original>E</original>
    <variation>Q</variation>
    <location>
        <position position="361"/>
    </location>
</feature>
<feature type="sequence conflict" description="In Ref. 5; CAA04168." evidence="34" ref="5">
    <original>R</original>
    <variation>P</variation>
    <location>
        <position position="381"/>
    </location>
</feature>
<feature type="sequence conflict" description="In Ref. 1; AAA32772." evidence="34" ref="1">
    <original>V</original>
    <variation>F</variation>
    <location>
        <position position="403"/>
    </location>
</feature>
<feature type="sequence conflict" description="In Ref. 1; AAA32772." evidence="34" ref="1">
    <original>L</original>
    <variation>R</variation>
    <location>
        <position position="456"/>
    </location>
</feature>
<feature type="sequence conflict" description="In Ref. 5; CAA04169." evidence="34" ref="5">
    <original>P</original>
    <variation>R</variation>
    <location>
        <position position="515"/>
    </location>
</feature>
<feature type="helix" evidence="39">
    <location>
        <begin position="349"/>
        <end position="352"/>
    </location>
</feature>
<feature type="strand" evidence="40">
    <location>
        <begin position="355"/>
        <end position="362"/>
    </location>
</feature>
<feature type="turn" evidence="37">
    <location>
        <begin position="367"/>
        <end position="369"/>
    </location>
</feature>
<feature type="strand" evidence="40">
    <location>
        <begin position="374"/>
        <end position="379"/>
    </location>
</feature>
<feature type="strand" evidence="40">
    <location>
        <begin position="383"/>
        <end position="390"/>
    </location>
</feature>
<feature type="strand" evidence="40">
    <location>
        <begin position="393"/>
        <end position="399"/>
    </location>
</feature>
<feature type="helix" evidence="40">
    <location>
        <begin position="400"/>
        <end position="405"/>
    </location>
</feature>
<feature type="helix" evidence="38">
    <location>
        <begin position="408"/>
        <end position="410"/>
    </location>
</feature>
<feature type="strand" evidence="40">
    <location>
        <begin position="414"/>
        <end position="418"/>
    </location>
</feature>
<feature type="strand" evidence="40">
    <location>
        <begin position="423"/>
        <end position="428"/>
    </location>
</feature>
<feature type="strand" evidence="40">
    <location>
        <begin position="430"/>
        <end position="432"/>
    </location>
</feature>
<feature type="strand" evidence="40">
    <location>
        <begin position="435"/>
        <end position="440"/>
    </location>
</feature>
<feature type="strand" evidence="40">
    <location>
        <begin position="445"/>
        <end position="449"/>
    </location>
</feature>
<feature type="turn" evidence="40">
    <location>
        <begin position="450"/>
        <end position="452"/>
    </location>
</feature>
<feature type="strand" evidence="40">
    <location>
        <begin position="455"/>
        <end position="459"/>
    </location>
</feature>
<feature type="strand" evidence="40">
    <location>
        <begin position="466"/>
        <end position="471"/>
    </location>
</feature>
<feature type="strand" evidence="40">
    <location>
        <begin position="473"/>
        <end position="475"/>
    </location>
</feature>
<feature type="strand" evidence="40">
    <location>
        <begin position="478"/>
        <end position="483"/>
    </location>
</feature>
<feature type="strand" evidence="40">
    <location>
        <begin position="486"/>
        <end position="492"/>
    </location>
</feature>
<feature type="strand" evidence="40">
    <location>
        <begin position="499"/>
        <end position="503"/>
    </location>
</feature>
<feature type="strand" evidence="40">
    <location>
        <begin position="508"/>
        <end position="513"/>
    </location>
</feature>
<feature type="strand" evidence="40">
    <location>
        <begin position="520"/>
        <end position="525"/>
    </location>
</feature>
<feature type="strand" evidence="40">
    <location>
        <begin position="530"/>
        <end position="534"/>
    </location>
</feature>
<feature type="strand" evidence="40">
    <location>
        <begin position="542"/>
        <end position="545"/>
    </location>
</feature>
<feature type="strand" evidence="40">
    <location>
        <begin position="552"/>
        <end position="567"/>
    </location>
</feature>
<feature type="turn" evidence="40">
    <location>
        <begin position="568"/>
        <end position="570"/>
    </location>
</feature>
<feature type="strand" evidence="40">
    <location>
        <begin position="571"/>
        <end position="576"/>
    </location>
</feature>
<feature type="turn" evidence="40">
    <location>
        <begin position="577"/>
        <end position="580"/>
    </location>
</feature>
<feature type="strand" evidence="40">
    <location>
        <begin position="581"/>
        <end position="586"/>
    </location>
</feature>
<feature type="strand" evidence="40">
    <location>
        <begin position="592"/>
        <end position="594"/>
    </location>
</feature>
<feature type="strand" evidence="40">
    <location>
        <begin position="598"/>
        <end position="600"/>
    </location>
</feature>
<feature type="strand" evidence="40">
    <location>
        <begin position="602"/>
        <end position="607"/>
    </location>
</feature>
<feature type="strand" evidence="40">
    <location>
        <begin position="612"/>
        <end position="618"/>
    </location>
</feature>
<feature type="strand" evidence="40">
    <location>
        <begin position="625"/>
        <end position="629"/>
    </location>
</feature>
<feature type="helix" evidence="37">
    <location>
        <begin position="633"/>
        <end position="636"/>
    </location>
</feature>
<feature type="turn" evidence="37">
    <location>
        <begin position="637"/>
        <end position="639"/>
    </location>
</feature>
<feature type="helix" evidence="39">
    <location>
        <begin position="642"/>
        <end position="644"/>
    </location>
</feature>
<feature type="strand" evidence="40">
    <location>
        <begin position="647"/>
        <end position="652"/>
    </location>
</feature>
<feature type="strand" evidence="40">
    <location>
        <begin position="656"/>
        <end position="663"/>
    </location>
</feature>
<feature type="strand" evidence="40">
    <location>
        <begin position="668"/>
        <end position="674"/>
    </location>
</feature>
<reference key="1">
    <citation type="journal article" date="1992" name="Cell">
        <title>COP1, an Arabidopsis regulatory gene, encodes a protein with both a zinc-binding motif and a G beta homologous domain.</title>
        <authorList>
            <person name="Deng X.-W."/>
            <person name="Matsui M."/>
            <person name="Wei N."/>
            <person name="Wagner D."/>
            <person name="Chu A.M."/>
            <person name="Feldmann K.A."/>
            <person name="Quail P.H."/>
        </authorList>
    </citation>
    <scope>NUCLEOTIDE SEQUENCE [MRNA]</scope>
    <source>
        <strain>cv. Columbia</strain>
        <tissue>Seedling</tissue>
    </source>
</reference>
<reference key="2">
    <citation type="journal article" date="1999" name="Nature">
        <title>Sequence and analysis of chromosome 2 of the plant Arabidopsis thaliana.</title>
        <authorList>
            <person name="Lin X."/>
            <person name="Kaul S."/>
            <person name="Rounsley S.D."/>
            <person name="Shea T.P."/>
            <person name="Benito M.-I."/>
            <person name="Town C.D."/>
            <person name="Fujii C.Y."/>
            <person name="Mason T.M."/>
            <person name="Bowman C.L."/>
            <person name="Barnstead M.E."/>
            <person name="Feldblyum T.V."/>
            <person name="Buell C.R."/>
            <person name="Ketchum K.A."/>
            <person name="Lee J.J."/>
            <person name="Ronning C.M."/>
            <person name="Koo H.L."/>
            <person name="Moffat K.S."/>
            <person name="Cronin L.A."/>
            <person name="Shen M."/>
            <person name="Pai G."/>
            <person name="Van Aken S."/>
            <person name="Umayam L."/>
            <person name="Tallon L.J."/>
            <person name="Gill J.E."/>
            <person name="Adams M.D."/>
            <person name="Carrera A.J."/>
            <person name="Creasy T.H."/>
            <person name="Goodman H.M."/>
            <person name="Somerville C.R."/>
            <person name="Copenhaver G.P."/>
            <person name="Preuss D."/>
            <person name="Nierman W.C."/>
            <person name="White O."/>
            <person name="Eisen J.A."/>
            <person name="Salzberg S.L."/>
            <person name="Fraser C.M."/>
            <person name="Venter J.C."/>
        </authorList>
    </citation>
    <scope>NUCLEOTIDE SEQUENCE [LARGE SCALE GENOMIC DNA]</scope>
    <source>
        <strain>cv. Columbia</strain>
    </source>
</reference>
<reference key="3">
    <citation type="journal article" date="2017" name="Plant J.">
        <title>Araport11: a complete reannotation of the Arabidopsis thaliana reference genome.</title>
        <authorList>
            <person name="Cheng C.Y."/>
            <person name="Krishnakumar V."/>
            <person name="Chan A.P."/>
            <person name="Thibaud-Nissen F."/>
            <person name="Schobel S."/>
            <person name="Town C.D."/>
        </authorList>
    </citation>
    <scope>GENOME REANNOTATION</scope>
    <source>
        <strain>cv. Columbia</strain>
    </source>
</reference>
<reference key="4">
    <citation type="submission" date="2006-05" db="EMBL/GenBank/DDBJ databases">
        <title>Arabidopsis ORF clones.</title>
        <authorList>
            <person name="Shinn P."/>
            <person name="Chen H."/>
            <person name="Kim C.J."/>
            <person name="Quinitio C."/>
            <person name="Ecker J.R."/>
        </authorList>
    </citation>
    <scope>NUCLEOTIDE SEQUENCE [LARGE SCALE MRNA]</scope>
    <source>
        <strain>cv. Columbia</strain>
    </source>
</reference>
<reference key="5">
    <citation type="journal article" date="1998" name="Plant J.">
        <title>Characterisation of exon skipping mutants of the COP1 gene from Arabidopsis.</title>
        <authorList>
            <person name="Simpson C.G."/>
            <person name="Mcquade C."/>
            <person name="Lyon J."/>
            <person name="Brown J.W.S."/>
        </authorList>
    </citation>
    <scope>NUCLEOTIDE SEQUENCE [GENOMIC DNA] OF 339-387 AND 506-594</scope>
</reference>
<reference key="6">
    <citation type="journal article" date="1994" name="Plant Cell">
        <title>Genetic and molecular analysis of an allelic series of cop1 mutants suggests functional roles for the multiple protein domains.</title>
        <authorList>
            <person name="McNellis T.W."/>
            <person name="von Arnim A.G."/>
            <person name="Araki T."/>
            <person name="Komeda Y."/>
            <person name="Misera S."/>
            <person name="Deng X.-W."/>
        </authorList>
    </citation>
    <scope>CHARACTERIZATION</scope>
    <scope>MUTANTS COP1-8 AND COP1-9</scope>
</reference>
<reference key="7">
    <citation type="journal article" date="1995" name="Proc. Natl. Acad. Sci. U.S.A.">
        <title>Arabidopsis COP1 protein specifically interacts in vitro with a cytoskeleton-associated protein, CIP1.</title>
        <authorList>
            <person name="Matsui M."/>
            <person name="Stoop C.D."/>
            <person name="von Arnim A.G."/>
            <person name="Wei N."/>
            <person name="Deng X.-W."/>
        </authorList>
    </citation>
    <scope>INTERACTION WITH CIP1</scope>
    <source>
        <strain>cv. Columbia</strain>
    </source>
</reference>
<reference key="8">
    <citation type="journal article" date="1999" name="J. Biol. Chem.">
        <title>A novel motif mediates the targeting of the Arabidopsis COP1 protein to subnuclear foci.</title>
        <authorList>
            <person name="Stacey M.G."/>
            <person name="von Arnim A.G."/>
        </authorList>
    </citation>
    <scope>SUBCELLULAR LOCATION</scope>
</reference>
<reference key="9">
    <citation type="journal article" date="1998" name="EMBO J.">
        <title>Functional dissection of Arabidopsis COP1 reveals specific roles of its three structural modules in light control of seedling development.</title>
        <authorList>
            <person name="Torii K.U."/>
            <person name="McNellis T.W."/>
            <person name="Deng X.-W."/>
        </authorList>
    </citation>
    <scope>INTERACTION</scope>
</reference>
<reference key="10">
    <citation type="journal article" date="1998" name="Plant Cell">
        <title>Role of a COP1 interactive protein in mediating light-regulated gene expression in arabidopsis.</title>
        <authorList>
            <person name="Yamamoto Y.Y."/>
            <person name="Matsui M."/>
            <person name="Ang L.-H."/>
            <person name="Deng X.-W."/>
        </authorList>
    </citation>
    <scope>FUNCTION</scope>
    <scope>INTERACTION WITH CIP7</scope>
    <source>
        <strain>cv. Columbia</strain>
        <strain>cv. Landsberg erecta</strain>
        <tissue>Etiolated seedling</tissue>
    </source>
</reference>
<reference key="11">
    <citation type="journal article" date="1999" name="J. Biol. Chem.">
        <title>The RING finger motif of photomorphogenic repressor COP1 specifically interacts with the RING-H2 motif of a novel Arabidopsis protein.</title>
        <authorList>
            <person name="Torii K.U."/>
            <person name="Stoop-Myer C.D."/>
            <person name="Okamoto H."/>
            <person name="Coleman J.E."/>
            <person name="Matsui M."/>
            <person name="Deng X.-W."/>
        </authorList>
    </citation>
    <scope>INTERACTION WITH CIP8</scope>
    <source>
        <tissue>Seedling</tissue>
    </source>
</reference>
<reference key="12">
    <citation type="journal article" date="1999" name="Plant Cell">
        <title>Discrete domains mediate the light-responsive nuclear and cytoplasmic localization of Arabidopsis COP1.</title>
        <authorList>
            <person name="Stacey M.G."/>
            <person name="Hicks S.N."/>
            <person name="von Arnim A.G."/>
        </authorList>
    </citation>
    <scope>SUBCELLULAR LOCATION</scope>
    <scope>MUTAGENESIS OF 294-ARG--LYS-296 AND 312-LYS--ARG-314</scope>
</reference>
<reference key="13">
    <citation type="journal article" date="2001" name="J. Biol. Chem.">
        <title>The phytochrome A-specific signaling intermediate SPA1 interacts directly with COP1, a constitutive repressor of light signaling in Arabidopsis.</title>
        <authorList>
            <person name="Hoecker U."/>
            <person name="Quail P.H."/>
        </authorList>
    </citation>
    <scope>CHARACTERIZATION</scope>
    <scope>INTERACTION WITH SPA1</scope>
</reference>
<reference key="14">
    <citation type="journal article" date="2001" name="EMBO J.">
        <title>Identification of a structural motif that confers specific interaction with the WD40 repeat domain of Arabidopsis COP1.</title>
        <authorList>
            <person name="Holm M."/>
            <person name="Hardtke C.S."/>
            <person name="Gaudet R."/>
            <person name="Deng X.-W."/>
        </authorList>
    </citation>
    <scope>INTERACTION WITH BBX24/STO AND BBX25/STH</scope>
    <scope>MUTANTS COP1-4; COP1-8 AND COP1-9</scope>
    <scope>MUTAGENESIS OF LYS-422; ARG-465; TRP-467; LYS-550 AND GLU-592</scope>
    <source>
        <tissue>Etiolated seedling</tissue>
    </source>
</reference>
<reference key="15">
    <citation type="journal article" date="2000" name="Nature">
        <title>Targeted destabilization of HY5 during light-regulated development of Arabidopsis.</title>
        <authorList>
            <person name="Osterlund M.T."/>
            <person name="Hardtke C.S."/>
            <person name="Wei N."/>
            <person name="Deng X.-W."/>
        </authorList>
    </citation>
    <scope>UBIQUITINATION OF HY5</scope>
</reference>
<reference key="16">
    <citation type="journal article" date="2002" name="Genes Dev.">
        <title>Two interacting bZIP proteins are direct targets of COP1-mediated control of light-dependent gene expression in Arabidopsis.</title>
        <authorList>
            <person name="Holm M."/>
            <person name="Ma L.-G."/>
            <person name="Qu L.-J."/>
            <person name="Deng X.-W."/>
        </authorList>
    </citation>
    <scope>FUNCTION IN DEGRADATION OF HYH</scope>
</reference>
<reference key="17">
    <citation type="journal article" date="2002" name="Plant J.">
        <title>AtMYB21, a gene encoding a flower-specific transcription factor, is regulated by COP1.</title>
        <authorList>
            <person name="Shin B."/>
            <person name="Choi G."/>
            <person name="Yi H."/>
            <person name="Yang S."/>
            <person name="Cho I."/>
            <person name="Kim J."/>
            <person name="Lee S."/>
            <person name="Paek N.-C."/>
            <person name="Kim J.-H."/>
            <person name="Song P.S."/>
            <person name="Choi G."/>
        </authorList>
    </citation>
    <scope>FUNCTION</scope>
</reference>
<reference key="18">
    <citation type="journal article" date="2003" name="Genes Dev.">
        <title>The COP1-SPA1 interaction defines a critical step in phytochrome A-mediated regulation of HY5 activity.</title>
        <authorList>
            <person name="Saijo Y."/>
            <person name="Sullivan J.A."/>
            <person name="Wang H."/>
            <person name="Yang J."/>
            <person name="Shen Y."/>
            <person name="Rubio V."/>
            <person name="Ma L."/>
            <person name="Hoecker U."/>
            <person name="Deng X.W."/>
        </authorList>
    </citation>
    <scope>INTERACTION WITH SPA1</scope>
    <scope>CATALYTIC ACTIVITY</scope>
    <scope>UBIQUITINATION</scope>
</reference>
<reference key="19">
    <citation type="journal article" date="2003" name="Plant J.">
        <title>The SPA1-like proteins SPA3 and SPA4 repress photomorphogenesis in the light.</title>
        <authorList>
            <person name="Laubinger S."/>
            <person name="Hoecker U."/>
        </authorList>
    </citation>
    <scope>INTERACTION WITH SPA3 AND SPA4</scope>
</reference>
<reference key="20">
    <citation type="journal article" date="2003" name="Nature">
        <title>LAF1 ubiquitination by COP1 controls photomorphogenesis and is stimulated by SPA1.</title>
        <authorList>
            <person name="Seo H.S."/>
            <person name="Yang J.-Y."/>
            <person name="Ishikawa M."/>
            <person name="Bolle C."/>
            <person name="Ballesteros M.L."/>
            <person name="Chua N.-H."/>
        </authorList>
    </citation>
    <scope>UBIQUITINATION</scope>
    <scope>UBIQUITINATION OF LAF1</scope>
    <scope>MUTAGENESIS OF CYS-52 AND CYS-55</scope>
</reference>
<reference key="21">
    <citation type="journal article" date="2004" name="Plant Cell">
        <title>The SPA quartet: a family of WD-repeat proteins with a central role in suppression of photomorphogenesis in Arabidopsis.</title>
        <authorList>
            <person name="Laubinger S."/>
            <person name="Fittinghoff K."/>
            <person name="Hoecker U."/>
        </authorList>
    </citation>
    <scope>INTERACTION WITH SPA2</scope>
</reference>
<reference key="22">
    <citation type="journal article" date="2004" name="Genes Dev.">
        <title>Arabidopsis COP10 forms a complex with DDB1 and DET1 in vivo and enhances the activity of ubiquitin conjugating enzymes.</title>
        <authorList>
            <person name="Yanagawa Y."/>
            <person name="Sullivan J.A."/>
            <person name="Komatsu S."/>
            <person name="Gusmaroli G."/>
            <person name="Suzuki G."/>
            <person name="Yin J."/>
            <person name="Ishibashi T."/>
            <person name="Saijo Y."/>
            <person name="Rubio V."/>
            <person name="Kimura S."/>
            <person name="Wang J."/>
            <person name="Deng X.-W."/>
        </authorList>
    </citation>
    <scope>INTERACTION WITH COP10</scope>
</reference>
<reference key="23">
    <citation type="journal article" date="2008" name="Mol. Cell">
        <title>Arabidopsis COP1/SPA1 complex and FHY1/FHY3 associate with distinct phosphorylated forms of phytochrome A in balancing light signaling.</title>
        <authorList>
            <person name="Saijo Y."/>
            <person name="Zhu D."/>
            <person name="Li J."/>
            <person name="Rubio V."/>
            <person name="Zhou Z."/>
            <person name="Shen Y."/>
            <person name="Hoecker U."/>
            <person name="Wang H."/>
            <person name="Deng X.W."/>
        </authorList>
    </citation>
    <scope>INTERACTION WITH SPA1 AND PHYA</scope>
    <scope>UBIQUITINATION OF PHYA</scope>
</reference>
<reference key="24">
    <citation type="journal article" date="2008" name="Plant Cell">
        <title>Characterization of Arabidopsis and rice DWD proteins and their roles as substrate receptors for CUL4-RING E3 ubiquitin ligases.</title>
        <authorList>
            <person name="Lee J.H."/>
            <person name="Terzaghi W."/>
            <person name="Gusmaroli G."/>
            <person name="Charron J.B."/>
            <person name="Yoon H.J."/>
            <person name="Chen H."/>
            <person name="He Y.J."/>
            <person name="Xiong Y."/>
            <person name="Deng X.W."/>
        </authorList>
    </citation>
    <scope>DWD MOTIF</scope>
</reference>
<reference key="25">
    <citation type="journal article" date="2009" name="EMBO J.">
        <title>Interaction of COP1 and UVR8 regulates UV-B-induced photomorphogenesis and stress acclimation in Arabidopsis.</title>
        <authorList>
            <person name="Favory J.J."/>
            <person name="Stec A."/>
            <person name="Gruber H."/>
            <person name="Rizzini L."/>
            <person name="Oravecz A."/>
            <person name="Funk M."/>
            <person name="Albert A."/>
            <person name="Cloix C."/>
            <person name="Jenkins G.I."/>
            <person name="Oakeley E.J."/>
            <person name="Seidlitz H.K."/>
            <person name="Nagy F."/>
            <person name="Ulm R."/>
        </authorList>
    </citation>
    <scope>INTERACTION WITH UVR8</scope>
    <source>
        <strain>cv. Wassilewskija</strain>
    </source>
</reference>
<reference key="26">
    <citation type="journal article" date="2010" name="Proc. Natl. Acad. Sci. U.S.A.">
        <title>Cryptochrome 2 and phototropin 2 regulate resistance protein-mediated viral defense by negatively regulating an E3 ubiquitin ligase.</title>
        <authorList>
            <person name="Jeong R.-D."/>
            <person name="Chandra-Shekara A.C."/>
            <person name="Barman S.R."/>
            <person name="Navarre D."/>
            <person name="Klessig D.F."/>
            <person name="Kachroo A."/>
            <person name="Kachroo P."/>
        </authorList>
    </citation>
    <scope>INTERACTION WITH HRT/RPP8 AND CRY2</scope>
</reference>
<reference key="27">
    <citation type="journal article" date="2011" name="Science">
        <title>Perception of UV-B by the Arabidopsis UVR8 protein.</title>
        <authorList>
            <person name="Rizzini L."/>
            <person name="Favory J.J."/>
            <person name="Cloix C."/>
            <person name="Faggionato D."/>
            <person name="O'Hara A."/>
            <person name="Kaiserli E."/>
            <person name="Baumeister R."/>
            <person name="Schaefer E."/>
            <person name="Nagy F."/>
            <person name="Jenkins G.I."/>
            <person name="Ulm R."/>
        </authorList>
    </citation>
    <scope>INTERACTION WITH UVR8</scope>
</reference>
<reference key="28">
    <citation type="journal article" date="2015" name="Plant Physiol.">
        <title>SHORT HYPOCOTYL IN WHITE LIGHT1 interacts with ELONGATED HYPOCOTYL5 (HY5) and CONSTITUTIVE PHOTOMORPHOGENIC1 (COP1) and promotes COP1-mediated degradation of HY5 during Arabidopsis seedling development.</title>
        <authorList>
            <person name="Srivastava A.K."/>
            <person name="Senapati D."/>
            <person name="Srivastava A."/>
            <person name="Chakraborty M."/>
            <person name="Gangappa S.N."/>
            <person name="Chattopadhyay S."/>
        </authorList>
    </citation>
    <scope>FUNCTION</scope>
    <scope>DISRUPTION PHENOTYPE</scope>
    <scope>INTERACTION WITH SHW1</scope>
    <scope>SUBCELLULAR LOCATION</scope>
    <source>
        <strain>cv. Columbia</strain>
    </source>
</reference>
<reference key="29">
    <citation type="journal article" date="2015" name="PLoS Genet.">
        <title>Arabidopsis COP1 SUPPRESSOR 2 represses COP1 E3 ubiquitin ligase activity through their coiled-coil domains association.</title>
        <authorList>
            <person name="Xu D."/>
            <person name="Lin F."/>
            <person name="Jiang Y."/>
            <person name="Ling J."/>
            <person name="Hettiarachchi C."/>
            <person name="Tellgren-Roth C."/>
            <person name="Holm M."/>
            <person name="Wei N."/>
            <person name="Deng X.W."/>
        </authorList>
    </citation>
    <scope>INTERACTION WITH CSU2</scope>
</reference>
<reference key="30">
    <citation type="journal article" date="2017" name="Biochem. Biophys. Res. Commun.">
        <title>DHU1 negatively regulates UV-B signaling via its direct interaction with COP1 and RUP1.</title>
        <authorList>
            <person name="Kim S.-H."/>
            <person name="Kim H."/>
            <person name="Chung S."/>
            <person name="Lee J.-H."/>
        </authorList>
    </citation>
    <scope>DISRUPTION PHENOTYPE</scope>
    <scope>INTERACTION WITH DHU1</scope>
    <source>
        <strain>cv. Columbia</strain>
    </source>
</reference>
<reference key="31">
    <citation type="journal article" date="2020" name="Mol. Plant">
        <title>PCH1 and PCHL directly interact with PIF1, promote its degradation, and inhibit its transcriptional function during photomorphogenesis.</title>
        <authorList>
            <person name="Cheng M.-C."/>
            <person name="Enderle B."/>
            <person name="Kathare P.K."/>
            <person name="Islam R."/>
            <person name="Hiltbrunner A."/>
            <person name="Huq E."/>
        </authorList>
    </citation>
    <scope>FUNCTION</scope>
    <scope>INTERACTION WITH PCH1 AND PCHL</scope>
    <source>
        <strain>cv. Columbia</strain>
    </source>
</reference>
<reference key="32">
    <citation type="journal article" date="2020" name="Plant Cell">
        <title>PHYTOCHROME INTERACTING FACTOR8 inhibits phytochrome a-mediated far-red light responses in Arabidopsis.</title>
        <authorList>
            <person name="Oh J."/>
            <person name="Park E."/>
            <person name="Song K."/>
            <person name="Bae G."/>
            <person name="Choi G."/>
        </authorList>
    </citation>
    <scope>FUNCTION</scope>
    <scope>INTERACTION WITH UNE10/PIF8</scope>
    <source>
        <strain>cv. Columbia</strain>
    </source>
</reference>
<reference key="33">
    <citation type="journal article" date="2016" name="Structure">
        <title>Structural basis for substrate selectivity of the E3 ligase COP1.</title>
        <authorList>
            <person name="Uljon S."/>
            <person name="Xu X."/>
            <person name="Durzynska I."/>
            <person name="Stein S."/>
            <person name="Adelmant G."/>
            <person name="Marto J.A."/>
            <person name="Pear W.S."/>
            <person name="Blacklow S.C."/>
        </authorList>
    </citation>
    <scope>X-RAY CRYSTALLOGRAPHY (1.60 ANGSTROMS) OF 349-675 IN COMPLEX WITH A HUMAN TRIB1 PEPTIDE</scope>
</reference>
<protein>
    <recommendedName>
        <fullName evidence="33">E3 ubiquitin-protein ligase COP1</fullName>
        <ecNumber evidence="15">2.3.2.27</ecNumber>
    </recommendedName>
    <alternativeName>
        <fullName evidence="33">Constitutive photomorphogenesis protein 1</fullName>
    </alternativeName>
    <alternativeName>
        <fullName evidence="33">RING-type E3 ubiquitin transferase COP1</fullName>
    </alternativeName>
</protein>
<dbReference type="EC" id="2.3.2.27" evidence="15"/>
<dbReference type="EMBL" id="L24437">
    <property type="protein sequence ID" value="AAA32772.1"/>
    <property type="molecule type" value="mRNA"/>
</dbReference>
<dbReference type="EMBL" id="AC003033">
    <property type="protein sequence ID" value="AAB91983.1"/>
    <property type="molecule type" value="Genomic_DNA"/>
</dbReference>
<dbReference type="EMBL" id="CP002685">
    <property type="protein sequence ID" value="AEC08766.1"/>
    <property type="molecule type" value="Genomic_DNA"/>
</dbReference>
<dbReference type="EMBL" id="BT025337">
    <property type="protein sequence ID" value="ABF57293.1"/>
    <property type="molecule type" value="mRNA"/>
</dbReference>
<dbReference type="EMBL" id="AJ000535">
    <property type="protein sequence ID" value="CAA04168.1"/>
    <property type="molecule type" value="Genomic_DNA"/>
</dbReference>
<dbReference type="EMBL" id="AJ000536">
    <property type="protein sequence ID" value="CAA04169.1"/>
    <property type="molecule type" value="Genomic_DNA"/>
</dbReference>
<dbReference type="PIR" id="T01112">
    <property type="entry name" value="T01112"/>
</dbReference>
<dbReference type="RefSeq" id="NP_180854.1">
    <property type="nucleotide sequence ID" value="NM_128855.4"/>
</dbReference>
<dbReference type="PDB" id="5IGO">
    <property type="method" value="X-ray"/>
    <property type="resolution" value="1.60 A"/>
    <property type="chains" value="A/B/C/D=349-675"/>
</dbReference>
<dbReference type="PDB" id="5KWN">
    <property type="method" value="X-ray"/>
    <property type="resolution" value="1.42 A"/>
    <property type="chains" value="A=349-675"/>
</dbReference>
<dbReference type="PDB" id="6QTO">
    <property type="method" value="X-ray"/>
    <property type="resolution" value="1.27 A"/>
    <property type="chains" value="A=349-675"/>
</dbReference>
<dbReference type="PDB" id="6QTQ">
    <property type="method" value="X-ray"/>
    <property type="resolution" value="1.30 A"/>
    <property type="chains" value="A=349-675"/>
</dbReference>
<dbReference type="PDB" id="6QTR">
    <property type="method" value="X-ray"/>
    <property type="resolution" value="1.37 A"/>
    <property type="chains" value="A=349-675"/>
</dbReference>
<dbReference type="PDB" id="6QTS">
    <property type="method" value="X-ray"/>
    <property type="resolution" value="1.11 A"/>
    <property type="chains" value="A=349-675"/>
</dbReference>
<dbReference type="PDB" id="6QTT">
    <property type="method" value="X-ray"/>
    <property type="resolution" value="1.51 A"/>
    <property type="chains" value="A=349-675"/>
</dbReference>
<dbReference type="PDB" id="6QTU">
    <property type="method" value="X-ray"/>
    <property type="resolution" value="1.30 A"/>
    <property type="chains" value="A=349-675"/>
</dbReference>
<dbReference type="PDB" id="6QTV">
    <property type="method" value="X-ray"/>
    <property type="resolution" value="1.31 A"/>
    <property type="chains" value="A=349-675"/>
</dbReference>
<dbReference type="PDB" id="6QTW">
    <property type="method" value="X-ray"/>
    <property type="resolution" value="1.39 A"/>
    <property type="chains" value="A=349-675"/>
</dbReference>
<dbReference type="PDB" id="6QTX">
    <property type="method" value="X-ray"/>
    <property type="resolution" value="1.95 A"/>
    <property type="chains" value="A=349-675"/>
</dbReference>
<dbReference type="PDB" id="7VGG">
    <property type="method" value="EM"/>
    <property type="resolution" value="3.10 A"/>
    <property type="chains" value="A=1-675"/>
</dbReference>
<dbReference type="PDBsum" id="5IGO"/>
<dbReference type="PDBsum" id="5KWN"/>
<dbReference type="PDBsum" id="6QTO"/>
<dbReference type="PDBsum" id="6QTQ"/>
<dbReference type="PDBsum" id="6QTR"/>
<dbReference type="PDBsum" id="6QTS"/>
<dbReference type="PDBsum" id="6QTT"/>
<dbReference type="PDBsum" id="6QTU"/>
<dbReference type="PDBsum" id="6QTV"/>
<dbReference type="PDBsum" id="6QTW"/>
<dbReference type="PDBsum" id="6QTX"/>
<dbReference type="PDBsum" id="7VGG"/>
<dbReference type="EMDB" id="EMD-31968"/>
<dbReference type="SMR" id="P43254"/>
<dbReference type="BioGRID" id="3204">
    <property type="interactions" value="59"/>
</dbReference>
<dbReference type="DIP" id="DIP-32850N"/>
<dbReference type="ELM" id="P43254"/>
<dbReference type="FunCoup" id="P43254">
    <property type="interactions" value="3186"/>
</dbReference>
<dbReference type="IntAct" id="P43254">
    <property type="interactions" value="30"/>
</dbReference>
<dbReference type="MINT" id="P43254"/>
<dbReference type="STRING" id="3702.P43254"/>
<dbReference type="iPTMnet" id="P43254"/>
<dbReference type="PaxDb" id="3702-AT2G32950.1"/>
<dbReference type="ProteomicsDB" id="220616"/>
<dbReference type="EnsemblPlants" id="AT2G32950.1">
    <property type="protein sequence ID" value="AT2G32950.1"/>
    <property type="gene ID" value="AT2G32950"/>
</dbReference>
<dbReference type="GeneID" id="817857"/>
<dbReference type="Gramene" id="AT2G32950.1">
    <property type="protein sequence ID" value="AT2G32950.1"/>
    <property type="gene ID" value="AT2G32950"/>
</dbReference>
<dbReference type="KEGG" id="ath:AT2G32950"/>
<dbReference type="Araport" id="AT2G32950"/>
<dbReference type="TAIR" id="AT2G32950">
    <property type="gene designation" value="COP1"/>
</dbReference>
<dbReference type="eggNOG" id="KOG0297">
    <property type="taxonomic scope" value="Eukaryota"/>
</dbReference>
<dbReference type="HOGENOM" id="CLU_006994_2_1_1"/>
<dbReference type="InParanoid" id="P43254"/>
<dbReference type="OMA" id="CWRQMSN"/>
<dbReference type="OrthoDB" id="273771at2759"/>
<dbReference type="PhylomeDB" id="P43254"/>
<dbReference type="UniPathway" id="UPA00143"/>
<dbReference type="CD-CODE" id="9A8A194B">
    <property type="entry name" value="Nuclear speckle"/>
</dbReference>
<dbReference type="PRO" id="PR:P43254"/>
<dbReference type="Proteomes" id="UP000006548">
    <property type="component" value="Chromosome 2"/>
</dbReference>
<dbReference type="ExpressionAtlas" id="P43254">
    <property type="expression patterns" value="baseline and differential"/>
</dbReference>
<dbReference type="GO" id="GO:0080008">
    <property type="term" value="C:Cul4-RING E3 ubiquitin ligase complex"/>
    <property type="evidence" value="ECO:0000250"/>
    <property type="project" value="TAIR"/>
</dbReference>
<dbReference type="GO" id="GO:0005737">
    <property type="term" value="C:cytoplasm"/>
    <property type="evidence" value="ECO:0007669"/>
    <property type="project" value="UniProtKB-SubCell"/>
</dbReference>
<dbReference type="GO" id="GO:0016604">
    <property type="term" value="C:nuclear body"/>
    <property type="evidence" value="ECO:0000314"/>
    <property type="project" value="TAIR"/>
</dbReference>
<dbReference type="GO" id="GO:0000152">
    <property type="term" value="C:nuclear ubiquitin ligase complex"/>
    <property type="evidence" value="ECO:0000304"/>
    <property type="project" value="TAIR"/>
</dbReference>
<dbReference type="GO" id="GO:0005634">
    <property type="term" value="C:nucleus"/>
    <property type="evidence" value="ECO:0000314"/>
    <property type="project" value="UniProtKB"/>
</dbReference>
<dbReference type="GO" id="GO:0042802">
    <property type="term" value="F:identical protein binding"/>
    <property type="evidence" value="ECO:0000353"/>
    <property type="project" value="IntAct"/>
</dbReference>
<dbReference type="GO" id="GO:0061630">
    <property type="term" value="F:ubiquitin protein ligase activity"/>
    <property type="evidence" value="ECO:0000314"/>
    <property type="project" value="TAIR"/>
</dbReference>
<dbReference type="GO" id="GO:0004842">
    <property type="term" value="F:ubiquitin-protein transferase activity"/>
    <property type="evidence" value="ECO:0000314"/>
    <property type="project" value="TAIR"/>
</dbReference>
<dbReference type="GO" id="GO:0008270">
    <property type="term" value="F:zinc ion binding"/>
    <property type="evidence" value="ECO:0007669"/>
    <property type="project" value="UniProtKB-KW"/>
</dbReference>
<dbReference type="GO" id="GO:0046283">
    <property type="term" value="P:anthocyanin-containing compound metabolic process"/>
    <property type="evidence" value="ECO:0000315"/>
    <property type="project" value="TAIR"/>
</dbReference>
<dbReference type="GO" id="GO:0006281">
    <property type="term" value="P:DNA repair"/>
    <property type="evidence" value="ECO:0000315"/>
    <property type="project" value="TAIR"/>
</dbReference>
<dbReference type="GO" id="GO:0009649">
    <property type="term" value="P:entrainment of circadian clock"/>
    <property type="evidence" value="ECO:0000315"/>
    <property type="project" value="TAIR"/>
</dbReference>
<dbReference type="GO" id="GO:0009640">
    <property type="term" value="P:photomorphogenesis"/>
    <property type="evidence" value="ECO:0000316"/>
    <property type="project" value="TAIR"/>
</dbReference>
<dbReference type="GO" id="GO:0048573">
    <property type="term" value="P:photoperiodism, flowering"/>
    <property type="evidence" value="ECO:0000315"/>
    <property type="project" value="TAIR"/>
</dbReference>
<dbReference type="GO" id="GO:0009963">
    <property type="term" value="P:positive regulation of flavonoid biosynthetic process"/>
    <property type="evidence" value="ECO:0000315"/>
    <property type="project" value="TAIR"/>
</dbReference>
<dbReference type="GO" id="GO:0016567">
    <property type="term" value="P:protein ubiquitination"/>
    <property type="evidence" value="ECO:0007669"/>
    <property type="project" value="UniProtKB-UniPathway"/>
</dbReference>
<dbReference type="GO" id="GO:0009585">
    <property type="term" value="P:red, far-red light phototransduction"/>
    <property type="evidence" value="ECO:0007669"/>
    <property type="project" value="UniProtKB-KW"/>
</dbReference>
<dbReference type="GO" id="GO:0010119">
    <property type="term" value="P:regulation of stomatal movement"/>
    <property type="evidence" value="ECO:0000315"/>
    <property type="project" value="TAIR"/>
</dbReference>
<dbReference type="GO" id="GO:0010224">
    <property type="term" value="P:response to UV-B"/>
    <property type="evidence" value="ECO:0000315"/>
    <property type="project" value="TAIR"/>
</dbReference>
<dbReference type="GO" id="GO:0009641">
    <property type="term" value="P:shade avoidance"/>
    <property type="evidence" value="ECO:0000315"/>
    <property type="project" value="TAIR"/>
</dbReference>
<dbReference type="GO" id="GO:0009647">
    <property type="term" value="P:skotomorphogenesis"/>
    <property type="evidence" value="ECO:0000304"/>
    <property type="project" value="TAIR"/>
</dbReference>
<dbReference type="CDD" id="cd16504">
    <property type="entry name" value="RING-HC_COP1"/>
    <property type="match status" value="1"/>
</dbReference>
<dbReference type="CDD" id="cd00200">
    <property type="entry name" value="WD40"/>
    <property type="match status" value="1"/>
</dbReference>
<dbReference type="FunFam" id="3.30.40.10:FF:000782">
    <property type="entry name" value="COP1 protein"/>
    <property type="match status" value="1"/>
</dbReference>
<dbReference type="FunFam" id="2.130.10.10:FF:000090">
    <property type="entry name" value="E3 ubiquitin-protein ligase RFWD2 isoform X1"/>
    <property type="match status" value="1"/>
</dbReference>
<dbReference type="Gene3D" id="2.130.10.10">
    <property type="entry name" value="YVTN repeat-like/Quinoprotein amine dehydrogenase"/>
    <property type="match status" value="1"/>
</dbReference>
<dbReference type="Gene3D" id="3.30.40.10">
    <property type="entry name" value="Zinc/RING finger domain, C3HC4 (zinc finger)"/>
    <property type="match status" value="1"/>
</dbReference>
<dbReference type="InterPro" id="IPR042755">
    <property type="entry name" value="COP1"/>
</dbReference>
<dbReference type="InterPro" id="IPR015943">
    <property type="entry name" value="WD40/YVTN_repeat-like_dom_sf"/>
</dbReference>
<dbReference type="InterPro" id="IPR019775">
    <property type="entry name" value="WD40_repeat_CS"/>
</dbReference>
<dbReference type="InterPro" id="IPR036322">
    <property type="entry name" value="WD40_repeat_dom_sf"/>
</dbReference>
<dbReference type="InterPro" id="IPR001680">
    <property type="entry name" value="WD40_rpt"/>
</dbReference>
<dbReference type="InterPro" id="IPR001841">
    <property type="entry name" value="Znf_RING"/>
</dbReference>
<dbReference type="InterPro" id="IPR013083">
    <property type="entry name" value="Znf_RING/FYVE/PHD"/>
</dbReference>
<dbReference type="InterPro" id="IPR017907">
    <property type="entry name" value="Znf_RING_CS"/>
</dbReference>
<dbReference type="PANTHER" id="PTHR44080">
    <property type="entry name" value="E3 UBIQUITIN-PROTEIN LIGASE COP1"/>
    <property type="match status" value="1"/>
</dbReference>
<dbReference type="PANTHER" id="PTHR44080:SF1">
    <property type="entry name" value="E3 UBIQUITIN-PROTEIN LIGASE COP1"/>
    <property type="match status" value="1"/>
</dbReference>
<dbReference type="Pfam" id="PF00400">
    <property type="entry name" value="WD40"/>
    <property type="match status" value="3"/>
</dbReference>
<dbReference type="Pfam" id="PF13923">
    <property type="entry name" value="zf-C3HC4_2"/>
    <property type="match status" value="1"/>
</dbReference>
<dbReference type="SMART" id="SM00184">
    <property type="entry name" value="RING"/>
    <property type="match status" value="1"/>
</dbReference>
<dbReference type="SMART" id="SM00320">
    <property type="entry name" value="WD40"/>
    <property type="match status" value="7"/>
</dbReference>
<dbReference type="SUPFAM" id="SSF57850">
    <property type="entry name" value="RING/U-box"/>
    <property type="match status" value="1"/>
</dbReference>
<dbReference type="SUPFAM" id="SSF50978">
    <property type="entry name" value="WD40 repeat-like"/>
    <property type="match status" value="1"/>
</dbReference>
<dbReference type="PROSITE" id="PS00678">
    <property type="entry name" value="WD_REPEATS_1"/>
    <property type="match status" value="1"/>
</dbReference>
<dbReference type="PROSITE" id="PS50082">
    <property type="entry name" value="WD_REPEATS_2"/>
    <property type="match status" value="2"/>
</dbReference>
<dbReference type="PROSITE" id="PS50294">
    <property type="entry name" value="WD_REPEATS_REGION"/>
    <property type="match status" value="1"/>
</dbReference>
<dbReference type="PROSITE" id="PS00518">
    <property type="entry name" value="ZF_RING_1"/>
    <property type="match status" value="1"/>
</dbReference>
<dbReference type="PROSITE" id="PS50089">
    <property type="entry name" value="ZF_RING_2"/>
    <property type="match status" value="1"/>
</dbReference>
<keyword id="KW-0002">3D-structure</keyword>
<keyword id="KW-0175">Coiled coil</keyword>
<keyword id="KW-0963">Cytoplasm</keyword>
<keyword id="KW-0479">Metal-binding</keyword>
<keyword id="KW-0539">Nucleus</keyword>
<keyword id="KW-0607">Phytochrome signaling pathway</keyword>
<keyword id="KW-1185">Reference proteome</keyword>
<keyword id="KW-0677">Repeat</keyword>
<keyword id="KW-0808">Transferase</keyword>
<keyword id="KW-0832">Ubl conjugation</keyword>
<keyword id="KW-0833">Ubl conjugation pathway</keyword>
<keyword id="KW-0853">WD repeat</keyword>
<keyword id="KW-0862">Zinc</keyword>
<keyword id="KW-0863">Zinc-finger</keyword>
<sequence>MEEISTDPVVPAVKPDPRTSSVGEGANRHENDDGGSGGSEIGAPDLDKDLLCPICMQIIKDAFLTACGHSFCYMCIITHLRNKSDCPCCSQHLTNNQLYPNFLLDKLLKKTSARHVSKTASPLDQFREALQRGCDVSIKEVDNLLTLLAERKRKMEQEEAERNMQILLDFLHCLRKQKVDELNEVQTDLQYIKEDINAVERHRIDLYRARDRYSVKLRMLGDDPSTRNAWPHEKNQIGFNSNSLSIRGGNFVGNYQNKKVEGKAQGSSHGLPKKDALSGSDSQSLNQSTVSMARKKRIHAQFNDLQECYLQKRRQLADQPNSKQENDKSVVRREGYSNGLADFQSVLTTFTRYSRLRVIAEIRHGDIFHSANIVSSIEFDRDDELFATAGVSRCIKVFDFSSVVNEPADMQCPIVEMSTRSKLSCLSWNKHEKNHIASSDYEGIVTVWDVTTRQSLMEYEEHEKRAWSVDFSRTEPSMLVSGSDDCKVKVWCTRQEASVINIDMKANICCVKYNPGSSNYIAVGSADHHIHYYDLRNISQPLHVFSGHKKAVSYVKFLSNNELASASTDSTLRLWDVKDNLPVRTFRGHTNEKNFVGLTVNSEYLACGSETNEVYVYHKEITRPVTSHRFGSPDMDDAEEEAGSYFISAVCWKSDSPTMLTANSQGTIKVLVLAA</sequence>
<comment type="function">
    <text evidence="11 12 22 26 27 29">E3 ubiquitin-protein ligase that acts as a repressor of photomorphogenesis and as an activator of etiolation in darkness. E3 ubiquitin ligases accept ubiquitin from an E2 ubiquitin-conjugating enzyme in the form of a thioester and then directly transfers the ubiquitin to targeted substrates. Represses photomorphogenesis in darkness by mediating ubiquitination and subsequent proteasomal degradation of light-induced transcription factors such as HY5, HYH and LAF1. Down-regulates MYB21, probably via ubiquitination process. Light stimuli abrogate the repression of photomorphogenesis, possibly due to its localization to the cytoplasm. Could play a role in switching between skotomorphogenetic and photomorphogenetic pathways. Mediates the ubiquitination-dependent degradation of HY5 in the darkness during seedling development (e.g. hypocotyl growth) (PubMed:26474641). Represses CIP7 in darkness (PubMed:9668129). Triggers ubiquitination and subsequent protein degradation of UNE10/PIF8, PCH1 and PCHL in the dark (PubMed:31732705).</text>
</comment>
<comment type="catalytic activity">
    <reaction evidence="15">
        <text>S-ubiquitinyl-[E2 ubiquitin-conjugating enzyme]-L-cysteine + [acceptor protein]-L-lysine = [E2 ubiquitin-conjugating enzyme]-L-cysteine + N(6)-ubiquitinyl-[acceptor protein]-L-lysine.</text>
        <dbReference type="EC" id="2.3.2.27"/>
    </reaction>
</comment>
<comment type="pathway">
    <text evidence="15">Protein modification; protein ubiquitination.</text>
</comment>
<comment type="subunit">
    <text evidence="7 9 10 14 15 16 17 18 19 20 21 22 23 25 26 27 28 29 30">Homodimer. Interacts with HY5, HYH, BBX24/STO, BBX25/STH, CIP8, COP10, SPA1, SPA2, SPA3, SPA4 and UVR8 and phosphorylated PHYA. Light induces dissociation of the SPA1/COP1 complex. Interacts with HRT/RPP8 and triggers it to the 26s proteasome. Binds to CRY2; this competitive interaction prevents triggering to proteasome of other binding proteins (PubMed:20624951). Binds to SHW1 in the nucleus (PubMed:26474641). Bonds to CIP7 (PubMed:9668129). Interacts with CSU2 (PubMed:26714275). Binds to CIP1 (PubMed:7753789). Interacts directly with DHU1 (PubMed:28735869). Associates to UNE10/PIF8 (PubMed:31732705). Binds directly to PCH1 and PCHL (PubMed:32061894).</text>
</comment>
<comment type="interaction">
    <interactant intactId="EBI-301649">
        <id>P43254</id>
    </interactant>
    <interactant intactId="EBI-631960">
        <id>Q9SID1</id>
        <label>BBX25</label>
    </interactant>
    <organismsDiffer>false</organismsDiffer>
    <experiments>3</experiments>
</comment>
<comment type="interaction">
    <interactant intactId="EBI-301649">
        <id>P43254</id>
    </interactant>
    <interactant intactId="EBI-2119970">
        <id>F4JZY1</id>
        <label>CIP1</label>
    </interactant>
    <organismsDiffer>false</organismsDiffer>
    <experiments>3</experiments>
</comment>
<comment type="interaction">
    <interactant intactId="EBI-301649">
        <id>P43254</id>
    </interactant>
    <interactant intactId="EBI-301644">
        <id>Q9SPL2</id>
        <label>CIP8</label>
    </interactant>
    <organismsDiffer>false</organismsDiffer>
    <experiments>6</experiments>
</comment>
<comment type="interaction">
    <interactant intactId="EBI-301649">
        <id>P43254</id>
    </interactant>
    <interactant intactId="EBI-1639724">
        <id>Q39057</id>
        <label>CO</label>
    </interactant>
    <organismsDiffer>false</organismsDiffer>
    <experiments>8</experiments>
</comment>
<comment type="interaction">
    <interactant intactId="EBI-301649">
        <id>P43254</id>
    </interactant>
    <interactant intactId="EBI-1995108">
        <id>Q9SK53</id>
        <label>COL3</label>
    </interactant>
    <organismsDiffer>false</organismsDiffer>
    <experiments>3</experiments>
</comment>
<comment type="interaction">
    <interactant intactId="EBI-301649">
        <id>P43254</id>
    </interactant>
    <interactant intactId="EBI-301649">
        <id>P43254</id>
        <label>COP1</label>
    </interactant>
    <organismsDiffer>false</organismsDiffer>
    <experiments>7</experiments>
</comment>
<comment type="interaction">
    <interactant intactId="EBI-301649">
        <id>P43254</id>
    </interactant>
    <interactant intactId="EBI-2429853">
        <id>Q9LJD7</id>
        <label>COP10</label>
    </interactant>
    <organismsDiffer>false</organismsDiffer>
    <experiments>3</experiments>
</comment>
<comment type="interaction">
    <interactant intactId="EBI-301649">
        <id>P43254</id>
    </interactant>
    <interactant intactId="EBI-300703">
        <id>Q43125</id>
        <label>CRY1</label>
    </interactant>
    <organismsDiffer>false</organismsDiffer>
    <experiments>4</experiments>
</comment>
<comment type="interaction">
    <interactant intactId="EBI-301649">
        <id>P43254</id>
    </interactant>
    <interactant intactId="EBI-531555">
        <id>Q96524</id>
        <label>CRY2</label>
    </interactant>
    <organismsDiffer>false</organismsDiffer>
    <experiments>3</experiments>
</comment>
<comment type="interaction">
    <interactant intactId="EBI-301649">
        <id>P43254</id>
    </interactant>
    <interactant intactId="EBI-626001">
        <id>Q9FE22</id>
        <label>HFR1</label>
    </interactant>
    <organismsDiffer>false</organismsDiffer>
    <experiments>6</experiments>
</comment>
<comment type="interaction">
    <interactant intactId="EBI-301649">
        <id>P43254</id>
    </interactant>
    <interactant intactId="EBI-301660">
        <id>O24646</id>
        <label>HY5</label>
    </interactant>
    <organismsDiffer>false</organismsDiffer>
    <experiments>8</experiments>
</comment>
<comment type="interaction">
    <interactant intactId="EBI-301649">
        <id>P43254</id>
    </interactant>
    <interactant intactId="EBI-11463635">
        <id>Q8W191-1</id>
        <label>HYH</label>
    </interactant>
    <organismsDiffer>false</organismsDiffer>
    <experiments>3</experiments>
</comment>
<comment type="interaction">
    <interactant intactId="EBI-301649">
        <id>P43254</id>
    </interactant>
    <interactant intactId="EBI-1543309">
        <id>Q9M0K4</id>
        <label>LAF1</label>
    </interactant>
    <organismsDiffer>false</organismsDiffer>
    <experiments>3</experiments>
</comment>
<comment type="interaction">
    <interactant intactId="EBI-301649">
        <id>P43254</id>
    </interactant>
    <interactant intactId="EBI-2270423">
        <id>P93025</id>
        <label>PHOT2</label>
    </interactant>
    <organismsDiffer>false</organismsDiffer>
    <experiments>2</experiments>
</comment>
<comment type="interaction">
    <interactant intactId="EBI-301649">
        <id>P43254</id>
    </interactant>
    <interactant intactId="EBI-2292310">
        <id>Q9SJL7</id>
        <label>RAX2</label>
    </interactant>
    <organismsDiffer>false</organismsDiffer>
    <experiments>3</experiments>
</comment>
<comment type="interaction">
    <interactant intactId="EBI-301649">
        <id>P43254</id>
    </interactant>
    <interactant intactId="EBI-15865035">
        <id>Q8W4J9</id>
        <label>RPP8</label>
    </interactant>
    <organismsDiffer>false</organismsDiffer>
    <experiments>2</experiments>
</comment>
<comment type="interaction">
    <interactant intactId="EBI-301649">
        <id>P43254</id>
    </interactant>
    <interactant intactId="EBI-626992">
        <id>Q9SYX2</id>
        <label>SPA1</label>
    </interactant>
    <organismsDiffer>false</organismsDiffer>
    <experiments>17</experiments>
</comment>
<comment type="interaction">
    <interactant intactId="EBI-301649">
        <id>P43254</id>
    </interactant>
    <interactant intactId="EBI-626921">
        <id>Q9LJR3</id>
        <label>SPA3</label>
    </interactant>
    <organismsDiffer>false</organismsDiffer>
    <experiments>7</experiments>
</comment>
<comment type="interaction">
    <interactant intactId="EBI-301649">
        <id>P43254</id>
    </interactant>
    <interactant intactId="EBI-626943">
        <id>Q94BM7</id>
        <label>SPA4</label>
    </interactant>
    <organismsDiffer>false</organismsDiffer>
    <experiments>14</experiments>
</comment>
<comment type="interaction">
    <interactant intactId="EBI-301649">
        <id>P43254</id>
    </interactant>
    <interactant intactId="EBI-2407499">
        <id>Q9FN03</id>
        <label>UVR8</label>
    </interactant>
    <organismsDiffer>false</organismsDiffer>
    <experiments>4</experiments>
</comment>
<comment type="subcellular location">
    <subcellularLocation>
        <location evidence="5 6 22">Nucleus</location>
    </subcellularLocation>
    <subcellularLocation>
        <location evidence="5 6">Cytoplasm</location>
    </subcellularLocation>
    <text evidence="5 6">Localizes to the nucleus in darkness but is gradually relocated to the cytoplasm upon illumination. Localizes to subnuclear foci (speckle) and in dispersed nuclear localization in the dark.</text>
</comment>
<comment type="domain">
    <text evidence="1">The coiled-coil domain (134-201) is necessary for SPA1, SPA3 or SPA4 binding. The DWD box is required for interaction with DDB1A.</text>
</comment>
<comment type="PTM">
    <text evidence="8 13 15 18">Autoubiquitinated.</text>
</comment>
<comment type="disruption phenotype">
    <text evidence="22 25">Abrogated induction of DHU1 in response to UV-B (PubMed:28735869). The double mutant shw1 cop1 displays an enhanced photomorphogenic growth in the darkness as well as abnormal accumulation of HY5 (PubMed:26474641). The double mutant dhu1-1 cop1-6 phenotype resemble that of the single mutant cop1-6 (PubMed:28735869).</text>
</comment>
<comment type="miscellaneous">
    <text>Plants lacking COP1 are not viable.</text>
</comment>
<comment type="miscellaneous">
    <text evidence="24">Although plants lack TRIB proteins, a human TRIB1 peptide binds to a highly conserved surface on the top face of the beta propeller, indicating a general mode for recognition of peptide motifs by COP1.</text>
</comment>
<accession>P43254</accession>
<accession>O23974</accession>
<accession>O23975</accession>
<accession>O48770</accession>
<accession>Q1JPL6</accession>
<proteinExistence type="evidence at protein level"/>
<organism>
    <name type="scientific">Arabidopsis thaliana</name>
    <name type="common">Mouse-ear cress</name>
    <dbReference type="NCBI Taxonomy" id="3702"/>
    <lineage>
        <taxon>Eukaryota</taxon>
        <taxon>Viridiplantae</taxon>
        <taxon>Streptophyta</taxon>
        <taxon>Embryophyta</taxon>
        <taxon>Tracheophyta</taxon>
        <taxon>Spermatophyta</taxon>
        <taxon>Magnoliopsida</taxon>
        <taxon>eudicotyledons</taxon>
        <taxon>Gunneridae</taxon>
        <taxon>Pentapetalae</taxon>
        <taxon>rosids</taxon>
        <taxon>malvids</taxon>
        <taxon>Brassicales</taxon>
        <taxon>Brassicaceae</taxon>
        <taxon>Camelineae</taxon>
        <taxon>Arabidopsis</taxon>
    </lineage>
</organism>